<proteinExistence type="evidence at protein level"/>
<dbReference type="EMBL" id="D88375">
    <property type="protein sequence ID" value="BAA13600.1"/>
    <property type="molecule type" value="mRNA"/>
</dbReference>
<dbReference type="EMBL" id="AL163572">
    <property type="protein sequence ID" value="CAB87152.1"/>
    <property type="molecule type" value="Genomic_DNA"/>
</dbReference>
<dbReference type="EMBL" id="CP002688">
    <property type="protein sequence ID" value="AED91895.1"/>
    <property type="molecule type" value="Genomic_DNA"/>
</dbReference>
<dbReference type="EMBL" id="AF380647">
    <property type="protein sequence ID" value="AAK55728.1"/>
    <property type="molecule type" value="mRNA"/>
</dbReference>
<dbReference type="EMBL" id="AY054139">
    <property type="protein sequence ID" value="AAL06800.1"/>
    <property type="molecule type" value="mRNA"/>
</dbReference>
<dbReference type="PIR" id="T48592">
    <property type="entry name" value="T48592"/>
</dbReference>
<dbReference type="RefSeq" id="NP_196849.1">
    <molecule id="Q96251-1"/>
    <property type="nucleotide sequence ID" value="NM_121348.4"/>
</dbReference>
<dbReference type="SMR" id="Q96251"/>
<dbReference type="BioGRID" id="16464">
    <property type="interactions" value="8"/>
</dbReference>
<dbReference type="FunCoup" id="Q96251">
    <property type="interactions" value="3460"/>
</dbReference>
<dbReference type="IntAct" id="Q96251">
    <property type="interactions" value="2"/>
</dbReference>
<dbReference type="MINT" id="Q96251"/>
<dbReference type="STRING" id="3702.Q96251"/>
<dbReference type="iPTMnet" id="Q96251"/>
<dbReference type="MetOSite" id="Q96251"/>
<dbReference type="PaxDb" id="3702-AT5G13450.1"/>
<dbReference type="ProteomicsDB" id="241092">
    <molecule id="Q96251-1"/>
</dbReference>
<dbReference type="EnsemblPlants" id="AT5G13450.1">
    <molecule id="Q96251-1"/>
    <property type="protein sequence ID" value="AT5G13450.1"/>
    <property type="gene ID" value="AT5G13450"/>
</dbReference>
<dbReference type="Gramene" id="AT5G13450.1">
    <molecule id="Q96251-1"/>
    <property type="protein sequence ID" value="AT5G13450.1"/>
    <property type="gene ID" value="AT5G13450"/>
</dbReference>
<dbReference type="KEGG" id="ath:AT5G13450"/>
<dbReference type="Araport" id="AT5G13450"/>
<dbReference type="TAIR" id="AT5G13450">
    <property type="gene designation" value="ATP5"/>
</dbReference>
<dbReference type="eggNOG" id="KOG1662">
    <property type="taxonomic scope" value="Eukaryota"/>
</dbReference>
<dbReference type="InParanoid" id="Q96251"/>
<dbReference type="OMA" id="VTTNWIN"/>
<dbReference type="PhylomeDB" id="Q96251"/>
<dbReference type="PRO" id="PR:Q96251"/>
<dbReference type="Proteomes" id="UP000006548">
    <property type="component" value="Chromosome 5"/>
</dbReference>
<dbReference type="ExpressionAtlas" id="Q96251">
    <property type="expression patterns" value="baseline and differential"/>
</dbReference>
<dbReference type="GO" id="GO:0009507">
    <property type="term" value="C:chloroplast"/>
    <property type="evidence" value="ECO:0007005"/>
    <property type="project" value="TAIR"/>
</dbReference>
<dbReference type="GO" id="GO:0005743">
    <property type="term" value="C:mitochondrial inner membrane"/>
    <property type="evidence" value="ECO:0007669"/>
    <property type="project" value="UniProtKB-SubCell"/>
</dbReference>
<dbReference type="GO" id="GO:0005739">
    <property type="term" value="C:mitochondrion"/>
    <property type="evidence" value="ECO:0000314"/>
    <property type="project" value="TAIR"/>
</dbReference>
<dbReference type="GO" id="GO:0009536">
    <property type="term" value="C:plastid"/>
    <property type="evidence" value="ECO:0007005"/>
    <property type="project" value="TAIR"/>
</dbReference>
<dbReference type="GO" id="GO:0050897">
    <property type="term" value="F:cobalt ion binding"/>
    <property type="evidence" value="ECO:0007005"/>
    <property type="project" value="TAIR"/>
</dbReference>
<dbReference type="GO" id="GO:0046933">
    <property type="term" value="F:proton-transporting ATP synthase activity, rotational mechanism"/>
    <property type="evidence" value="ECO:0007669"/>
    <property type="project" value="InterPro"/>
</dbReference>
<dbReference type="GO" id="GO:0008270">
    <property type="term" value="F:zinc ion binding"/>
    <property type="evidence" value="ECO:0007005"/>
    <property type="project" value="TAIR"/>
</dbReference>
<dbReference type="FunFam" id="1.10.520.20:FF:000002">
    <property type="entry name" value="ATP synthase subunit O, mitochondrial"/>
    <property type="match status" value="1"/>
</dbReference>
<dbReference type="Gene3D" id="1.10.520.20">
    <property type="entry name" value="N-terminal domain of the delta subunit of the F1F0-ATP synthase"/>
    <property type="match status" value="1"/>
</dbReference>
<dbReference type="HAMAP" id="MF_01416">
    <property type="entry name" value="ATP_synth_delta_bact"/>
    <property type="match status" value="1"/>
</dbReference>
<dbReference type="InterPro" id="IPR026015">
    <property type="entry name" value="ATP_synth_OSCP/delta_N_sf"/>
</dbReference>
<dbReference type="InterPro" id="IPR000711">
    <property type="entry name" value="ATPase_OSCP/dsu"/>
</dbReference>
<dbReference type="NCBIfam" id="TIGR01145">
    <property type="entry name" value="ATP_synt_delta"/>
    <property type="match status" value="1"/>
</dbReference>
<dbReference type="PANTHER" id="PTHR11910">
    <property type="entry name" value="ATP SYNTHASE DELTA CHAIN"/>
    <property type="match status" value="1"/>
</dbReference>
<dbReference type="Pfam" id="PF00213">
    <property type="entry name" value="OSCP"/>
    <property type="match status" value="1"/>
</dbReference>
<dbReference type="PRINTS" id="PR00125">
    <property type="entry name" value="ATPASEDELTA"/>
</dbReference>
<dbReference type="SUPFAM" id="SSF47928">
    <property type="entry name" value="N-terminal domain of the delta subunit of the F1F0-ATP synthase"/>
    <property type="match status" value="1"/>
</dbReference>
<accession>Q96251</accession>
<accession>Q93W68</accession>
<accession>Q9LYR1</accession>
<feature type="transit peptide" description="Mitochondrion" evidence="1 2">
    <location>
        <begin position="1"/>
        <end position="36"/>
    </location>
</feature>
<feature type="chain" id="PRO_0000002643" description="ATP synthase subunit O, mitochondrial">
    <location>
        <begin position="37"/>
        <end position="238"/>
    </location>
</feature>
<feature type="modified residue" description="Phosphothreonine" evidence="5">
    <location>
        <position position="90"/>
    </location>
</feature>
<feature type="sequence conflict" description="In Ref. 4; AAK55728/AAL06800." evidence="3" ref="4">
    <original>K</original>
    <variation>T</variation>
    <location>
        <position position="27"/>
    </location>
</feature>
<feature type="sequence conflict" description="In Ref. 1; BAA13600." evidence="3" ref="1">
    <location>
        <position position="158"/>
    </location>
</feature>
<name>ATPO_ARATH</name>
<protein>
    <recommendedName>
        <fullName>ATP synthase subunit O, mitochondrial</fullName>
    </recommendedName>
    <alternativeName>
        <fullName>Oligomycin sensitivity conferral protein</fullName>
        <shortName>OSCP</shortName>
    </alternativeName>
</protein>
<evidence type="ECO:0000269" key="1">
    <source>
    </source>
</evidence>
<evidence type="ECO:0000269" key="2">
    <source>
    </source>
</evidence>
<evidence type="ECO:0000305" key="3"/>
<evidence type="ECO:0000305" key="4">
    <source>
    </source>
</evidence>
<evidence type="ECO:0007744" key="5">
    <source>
    </source>
</evidence>
<reference key="1">
    <citation type="online journal article" date="1996" name="Plant Gene Register">
        <title>Nucleotide sequence of cDNAs encoding gamma, delta, delta-prime, and epsilon subunits of mitochondrial F1-ATPase in Arabidopsis thaliana.</title>
        <authorList>
            <person name="Sakamoto W."/>
            <person name="Wintz H."/>
        </authorList>
        <locator>PGR96-125</locator>
    </citation>
    <scope>NUCLEOTIDE SEQUENCE [MRNA]</scope>
    <source>
        <strain>cv. Columbia</strain>
    </source>
</reference>
<reference key="2">
    <citation type="journal article" date="2000" name="Nature">
        <title>Sequence and analysis of chromosome 5 of the plant Arabidopsis thaliana.</title>
        <authorList>
            <person name="Tabata S."/>
            <person name="Kaneko T."/>
            <person name="Nakamura Y."/>
            <person name="Kotani H."/>
            <person name="Kato T."/>
            <person name="Asamizu E."/>
            <person name="Miyajima N."/>
            <person name="Sasamoto S."/>
            <person name="Kimura T."/>
            <person name="Hosouchi T."/>
            <person name="Kawashima K."/>
            <person name="Kohara M."/>
            <person name="Matsumoto M."/>
            <person name="Matsuno A."/>
            <person name="Muraki A."/>
            <person name="Nakayama S."/>
            <person name="Nakazaki N."/>
            <person name="Naruo K."/>
            <person name="Okumura S."/>
            <person name="Shinpo S."/>
            <person name="Takeuchi C."/>
            <person name="Wada T."/>
            <person name="Watanabe A."/>
            <person name="Yamada M."/>
            <person name="Yasuda M."/>
            <person name="Sato S."/>
            <person name="de la Bastide M."/>
            <person name="Huang E."/>
            <person name="Spiegel L."/>
            <person name="Gnoj L."/>
            <person name="O'Shaughnessy A."/>
            <person name="Preston R."/>
            <person name="Habermann K."/>
            <person name="Murray J."/>
            <person name="Johnson D."/>
            <person name="Rohlfing T."/>
            <person name="Nelson J."/>
            <person name="Stoneking T."/>
            <person name="Pepin K."/>
            <person name="Spieth J."/>
            <person name="Sekhon M."/>
            <person name="Armstrong J."/>
            <person name="Becker M."/>
            <person name="Belter E."/>
            <person name="Cordum H."/>
            <person name="Cordes M."/>
            <person name="Courtney L."/>
            <person name="Courtney W."/>
            <person name="Dante M."/>
            <person name="Du H."/>
            <person name="Edwards J."/>
            <person name="Fryman J."/>
            <person name="Haakensen B."/>
            <person name="Lamar E."/>
            <person name="Latreille P."/>
            <person name="Leonard S."/>
            <person name="Meyer R."/>
            <person name="Mulvaney E."/>
            <person name="Ozersky P."/>
            <person name="Riley A."/>
            <person name="Strowmatt C."/>
            <person name="Wagner-McPherson C."/>
            <person name="Wollam A."/>
            <person name="Yoakum M."/>
            <person name="Bell M."/>
            <person name="Dedhia N."/>
            <person name="Parnell L."/>
            <person name="Shah R."/>
            <person name="Rodriguez M."/>
            <person name="Hoon See L."/>
            <person name="Vil D."/>
            <person name="Baker J."/>
            <person name="Kirchoff K."/>
            <person name="Toth K."/>
            <person name="King L."/>
            <person name="Bahret A."/>
            <person name="Miller B."/>
            <person name="Marra M.A."/>
            <person name="Martienssen R."/>
            <person name="McCombie W.R."/>
            <person name="Wilson R.K."/>
            <person name="Murphy G."/>
            <person name="Bancroft I."/>
            <person name="Volckaert G."/>
            <person name="Wambutt R."/>
            <person name="Duesterhoeft A."/>
            <person name="Stiekema W."/>
            <person name="Pohl T."/>
            <person name="Entian K.-D."/>
            <person name="Terryn N."/>
            <person name="Hartley N."/>
            <person name="Bent E."/>
            <person name="Johnson S."/>
            <person name="Langham S.-A."/>
            <person name="McCullagh B."/>
            <person name="Robben J."/>
            <person name="Grymonprez B."/>
            <person name="Zimmermann W."/>
            <person name="Ramsperger U."/>
            <person name="Wedler H."/>
            <person name="Balke K."/>
            <person name="Wedler E."/>
            <person name="Peters S."/>
            <person name="van Staveren M."/>
            <person name="Dirkse W."/>
            <person name="Mooijman P."/>
            <person name="Klein Lankhorst R."/>
            <person name="Weitzenegger T."/>
            <person name="Bothe G."/>
            <person name="Rose M."/>
            <person name="Hauf J."/>
            <person name="Berneiser S."/>
            <person name="Hempel S."/>
            <person name="Feldpausch M."/>
            <person name="Lamberth S."/>
            <person name="Villarroel R."/>
            <person name="Gielen J."/>
            <person name="Ardiles W."/>
            <person name="Bents O."/>
            <person name="Lemcke K."/>
            <person name="Kolesov G."/>
            <person name="Mayer K.F.X."/>
            <person name="Rudd S."/>
            <person name="Schoof H."/>
            <person name="Schueller C."/>
            <person name="Zaccaria P."/>
            <person name="Mewes H.-W."/>
            <person name="Bevan M."/>
            <person name="Fransz P.F."/>
        </authorList>
    </citation>
    <scope>NUCLEOTIDE SEQUENCE [LARGE SCALE GENOMIC DNA]</scope>
    <source>
        <strain>cv. Columbia</strain>
    </source>
</reference>
<reference key="3">
    <citation type="journal article" date="2017" name="Plant J.">
        <title>Araport11: a complete reannotation of the Arabidopsis thaliana reference genome.</title>
        <authorList>
            <person name="Cheng C.Y."/>
            <person name="Krishnakumar V."/>
            <person name="Chan A.P."/>
            <person name="Thibaud-Nissen F."/>
            <person name="Schobel S."/>
            <person name="Town C.D."/>
        </authorList>
    </citation>
    <scope>GENOME REANNOTATION</scope>
    <source>
        <strain>cv. Columbia</strain>
    </source>
</reference>
<reference key="4">
    <citation type="journal article" date="2003" name="Science">
        <title>Empirical analysis of transcriptional activity in the Arabidopsis genome.</title>
        <authorList>
            <person name="Yamada K."/>
            <person name="Lim J."/>
            <person name="Dale J.M."/>
            <person name="Chen H."/>
            <person name="Shinn P."/>
            <person name="Palm C.J."/>
            <person name="Southwick A.M."/>
            <person name="Wu H.C."/>
            <person name="Kim C.J."/>
            <person name="Nguyen M."/>
            <person name="Pham P.K."/>
            <person name="Cheuk R.F."/>
            <person name="Karlin-Newmann G."/>
            <person name="Liu S.X."/>
            <person name="Lam B."/>
            <person name="Sakano H."/>
            <person name="Wu T."/>
            <person name="Yu G."/>
            <person name="Miranda M."/>
            <person name="Quach H.L."/>
            <person name="Tripp M."/>
            <person name="Chang C.H."/>
            <person name="Lee J.M."/>
            <person name="Toriumi M.J."/>
            <person name="Chan M.M."/>
            <person name="Tang C.C."/>
            <person name="Onodera C.S."/>
            <person name="Deng J.M."/>
            <person name="Akiyama K."/>
            <person name="Ansari Y."/>
            <person name="Arakawa T."/>
            <person name="Banh J."/>
            <person name="Banno F."/>
            <person name="Bowser L."/>
            <person name="Brooks S.Y."/>
            <person name="Carninci P."/>
            <person name="Chao Q."/>
            <person name="Choy N."/>
            <person name="Enju A."/>
            <person name="Goldsmith A.D."/>
            <person name="Gurjal M."/>
            <person name="Hansen N.F."/>
            <person name="Hayashizaki Y."/>
            <person name="Johnson-Hopson C."/>
            <person name="Hsuan V.W."/>
            <person name="Iida K."/>
            <person name="Karnes M."/>
            <person name="Khan S."/>
            <person name="Koesema E."/>
            <person name="Ishida J."/>
            <person name="Jiang P.X."/>
            <person name="Jones T."/>
            <person name="Kawai J."/>
            <person name="Kamiya A."/>
            <person name="Meyers C."/>
            <person name="Nakajima M."/>
            <person name="Narusaka M."/>
            <person name="Seki M."/>
            <person name="Sakurai T."/>
            <person name="Satou M."/>
            <person name="Tamse R."/>
            <person name="Vaysberg M."/>
            <person name="Wallender E.K."/>
            <person name="Wong C."/>
            <person name="Yamamura Y."/>
            <person name="Yuan S."/>
            <person name="Shinozaki K."/>
            <person name="Davis R.W."/>
            <person name="Theologis A."/>
            <person name="Ecker J.R."/>
        </authorList>
    </citation>
    <scope>NUCLEOTIDE SEQUENCE [LARGE SCALE MRNA]</scope>
    <source>
        <strain>cv. Columbia</strain>
    </source>
</reference>
<reference key="5">
    <citation type="journal article" date="2001" name="Plant Physiol.">
        <title>Proteomic approach to identify novel mitochondrial proteins in Arabidopsis.</title>
        <authorList>
            <person name="Kruft V."/>
            <person name="Eubel H."/>
            <person name="Jaensch L."/>
            <person name="Werhahn W."/>
            <person name="Braun H.-P."/>
        </authorList>
    </citation>
    <scope>PROTEIN SEQUENCE OF 37-51</scope>
    <scope>SUBCELLULAR LOCATION</scope>
    <source>
        <tissue>Leaf</tissue>
        <tissue>Stem</tissue>
    </source>
</reference>
<reference key="6">
    <citation type="journal article" date="2004" name="Plant Cell">
        <title>Experimental analysis of the Arabidopsis mitochondrial proteome highlights signaling and regulatory components, provides assessment of targeting prediction programs, and indicates plant-specific mitochondrial proteins.</title>
        <authorList>
            <person name="Heazlewood J.L."/>
            <person name="Tonti-Filippini J.S."/>
            <person name="Gout A.M."/>
            <person name="Day D.A."/>
            <person name="Whelan J."/>
            <person name="Millar A.H."/>
        </authorList>
    </citation>
    <scope>IDENTIFICATION BY MASS SPECTROMETRY</scope>
    <scope>SUBCELLULAR LOCATION [LARGE SCALE ANALYSIS]</scope>
    <source>
        <strain>cv. Landsberg erecta</strain>
    </source>
</reference>
<reference key="7">
    <citation type="journal article" date="2012" name="J. Proteome Res.">
        <title>Identification of phosphoproteins in Arabidopsis thaliana leaves using polyethylene glycol fractionation, immobilized metal-ion affinity chromatography, two-dimensional gel electrophoresis and mass spectrometry.</title>
        <authorList>
            <person name="Aryal U.K."/>
            <person name="Krochko J.E."/>
            <person name="Ross A.R."/>
        </authorList>
    </citation>
    <scope>PHOSPHORYLATION [LARGE SCALE ANALYSIS] AT THR-90</scope>
    <scope>IDENTIFICATION BY MASS SPECTROMETRY [LARGE SCALE ANALYSIS]</scope>
</reference>
<reference key="8">
    <citation type="journal article" date="2015" name="Plant Physiol.">
        <title>INTERMEDIATE CLEAVAGE PEPTIDASE55 modifies enzyme amino termini and alters protein stability in Arabidopsis mitochondria.</title>
        <authorList>
            <person name="Huang S."/>
            <person name="Nelson C.J."/>
            <person name="Li L."/>
            <person name="Taylor N.L."/>
            <person name="Stroeher E."/>
            <person name="Peteriet J."/>
            <person name="Millar A.H."/>
        </authorList>
    </citation>
    <scope>IDENTIFICATION BY MASS SPECTROMETRY</scope>
    <scope>CLEAVAGE OF TRANSIT PEPTIDE AFTER TRP-36</scope>
</reference>
<sequence>MANRFRSGISFFKTIAVTDSVSSVRSKSLFPALRTYATASAQTTANVKVPIALVGENGNFASWLYIAAVKMNSLEKIETDLSEMIEAMKTAPIFAQFTKDPSVPRGTRLAAIRDACDQAKFAEPTKNFLSLLAENGKLKNLDAIVKKFMQLTNAHRGDVKVLVTTVIPLPPAEEKELTETLQEIIGAGKKITVEQKIDPSIYGGLIVEFQQKVLDMSIRTRAQQMERLLREPVDFNNL</sequence>
<keyword id="KW-0025">Alternative splicing</keyword>
<keyword id="KW-0066">ATP synthesis</keyword>
<keyword id="KW-0903">Direct protein sequencing</keyword>
<keyword id="KW-0375">Hydrogen ion transport</keyword>
<keyword id="KW-0406">Ion transport</keyword>
<keyword id="KW-0472">Membrane</keyword>
<keyword id="KW-0496">Mitochondrion</keyword>
<keyword id="KW-0999">Mitochondrion inner membrane</keyword>
<keyword id="KW-0597">Phosphoprotein</keyword>
<keyword id="KW-1185">Reference proteome</keyword>
<keyword id="KW-0809">Transit peptide</keyword>
<keyword id="KW-0813">Transport</keyword>
<gene>
    <name type="ordered locus">At5g13450</name>
    <name type="ORF">T22N19.100</name>
</gene>
<comment type="function">
    <text>Mitochondrial membrane ATP synthase (F(1)F(0) ATP synthase or Complex V) produces ATP from ADP in the presence of a proton gradient across the membrane which is generated by electron transport complexes of the respiratory chain. F-type ATPases consist of two structural domains, F(1) - containing the extramembraneous catalytic core and F(0) - containing the membrane proton channel, linked together by a central stalk and a peripheral stalk. During catalysis, ATP synthesis in the catalytic domain of F(1) is coupled via a rotary mechanism of the central stalk subunits to proton translocation. Part of the complex F(0) domain and the peripheric stalk, which acts as a stator to hold the catalytic alpha(3)beta(3) subcomplex and subunit a/ATP6 static relative to the rotary elements.</text>
</comment>
<comment type="subunit">
    <text>F-type ATPases have 2 components, CF(1) - the catalytic core - and CF(0) - the membrane proton channel. CF(1) has five subunits: alpha(3), beta(3), gamma(1), delta(1), epsilon(1). CF(0) has three main subunits: a, b and c.</text>
</comment>
<comment type="subcellular location">
    <subcellularLocation>
        <location evidence="4">Mitochondrion</location>
    </subcellularLocation>
    <subcellularLocation>
        <location>Mitochondrion inner membrane</location>
    </subcellularLocation>
</comment>
<comment type="alternative products">
    <event type="alternative splicing"/>
    <isoform>
        <id>Q96251-1</id>
        <name>1</name>
        <sequence type="displayed"/>
    </isoform>
    <text>A number of isoforms are produced. According to EST sequences.</text>
</comment>
<comment type="similarity">
    <text evidence="3">Belongs to the ATPase delta chain family.</text>
</comment>
<organism>
    <name type="scientific">Arabidopsis thaliana</name>
    <name type="common">Mouse-ear cress</name>
    <dbReference type="NCBI Taxonomy" id="3702"/>
    <lineage>
        <taxon>Eukaryota</taxon>
        <taxon>Viridiplantae</taxon>
        <taxon>Streptophyta</taxon>
        <taxon>Embryophyta</taxon>
        <taxon>Tracheophyta</taxon>
        <taxon>Spermatophyta</taxon>
        <taxon>Magnoliopsida</taxon>
        <taxon>eudicotyledons</taxon>
        <taxon>Gunneridae</taxon>
        <taxon>Pentapetalae</taxon>
        <taxon>rosids</taxon>
        <taxon>malvids</taxon>
        <taxon>Brassicales</taxon>
        <taxon>Brassicaceae</taxon>
        <taxon>Camelineae</taxon>
        <taxon>Arabidopsis</taxon>
    </lineage>
</organism>